<keyword id="KW-0021">Allosteric enzyme</keyword>
<keyword id="KW-0119">Carbohydrate metabolism</keyword>
<keyword id="KW-1015">Disulfide bond</keyword>
<keyword id="KW-0378">Hydrolase</keyword>
<accession>B5YQM0</accession>
<evidence type="ECO:0000255" key="1">
    <source>
        <dbReference type="HAMAP-Rule" id="MF_01241"/>
    </source>
</evidence>
<feature type="chain" id="PRO_1000139769" description="Glucosamine-6-phosphate deaminase">
    <location>
        <begin position="1"/>
        <end position="266"/>
    </location>
</feature>
<feature type="active site" description="Proton acceptor; for enolization step" evidence="1">
    <location>
        <position position="72"/>
    </location>
</feature>
<feature type="active site" description="For ring-opening step" evidence="1">
    <location>
        <position position="141"/>
    </location>
</feature>
<feature type="active site" description="Proton acceptor; for ring-opening step" evidence="1">
    <location>
        <position position="143"/>
    </location>
</feature>
<feature type="active site" description="For ring-opening step" evidence="1">
    <location>
        <position position="148"/>
    </location>
</feature>
<feature type="site" description="Part of the allosteric site" evidence="1">
    <location>
        <position position="151"/>
    </location>
</feature>
<feature type="site" description="Part of the allosteric site" evidence="1">
    <location>
        <position position="158"/>
    </location>
</feature>
<feature type="site" description="Part of the allosteric site" evidence="1">
    <location>
        <position position="160"/>
    </location>
</feature>
<feature type="site" description="Part of the allosteric site" evidence="1">
    <location>
        <position position="161"/>
    </location>
</feature>
<feature type="site" description="Part of the allosteric site" evidence="1">
    <location>
        <position position="254"/>
    </location>
</feature>
<feature type="disulfide bond" description="Interchain" evidence="1">
    <location>
        <position position="219"/>
    </location>
</feature>
<reference key="1">
    <citation type="journal article" date="2011" name="Proc. Natl. Acad. Sci. U.S.A.">
        <title>Genomic anatomy of Escherichia coli O157:H7 outbreaks.</title>
        <authorList>
            <person name="Eppinger M."/>
            <person name="Mammel M.K."/>
            <person name="Leclerc J.E."/>
            <person name="Ravel J."/>
            <person name="Cebula T.A."/>
        </authorList>
    </citation>
    <scope>NUCLEOTIDE SEQUENCE [LARGE SCALE GENOMIC DNA]</scope>
    <source>
        <strain>EC4115 / EHEC</strain>
    </source>
</reference>
<organism>
    <name type="scientific">Escherichia coli O157:H7 (strain EC4115 / EHEC)</name>
    <dbReference type="NCBI Taxonomy" id="444450"/>
    <lineage>
        <taxon>Bacteria</taxon>
        <taxon>Pseudomonadati</taxon>
        <taxon>Pseudomonadota</taxon>
        <taxon>Gammaproteobacteria</taxon>
        <taxon>Enterobacterales</taxon>
        <taxon>Enterobacteriaceae</taxon>
        <taxon>Escherichia</taxon>
    </lineage>
</organism>
<proteinExistence type="inferred from homology"/>
<protein>
    <recommendedName>
        <fullName evidence="1">Glucosamine-6-phosphate deaminase</fullName>
        <ecNumber evidence="1">3.5.99.6</ecNumber>
    </recommendedName>
    <alternativeName>
        <fullName evidence="1">GlcN6P deaminase</fullName>
        <shortName evidence="1">GNPDA</shortName>
    </alternativeName>
    <alternativeName>
        <fullName evidence="1">Glucosamine-6-phosphate isomerase</fullName>
    </alternativeName>
</protein>
<dbReference type="EC" id="3.5.99.6" evidence="1"/>
<dbReference type="EMBL" id="CP001164">
    <property type="protein sequence ID" value="ACI35627.1"/>
    <property type="molecule type" value="Genomic_DNA"/>
</dbReference>
<dbReference type="RefSeq" id="WP_001237072.1">
    <property type="nucleotide sequence ID" value="NC_011353.1"/>
</dbReference>
<dbReference type="SMR" id="B5YQM0"/>
<dbReference type="GeneID" id="93776807"/>
<dbReference type="KEGG" id="ecf:ECH74115_0769"/>
<dbReference type="HOGENOM" id="CLU_049611_0_1_6"/>
<dbReference type="UniPathway" id="UPA00629">
    <property type="reaction ID" value="UER00684"/>
</dbReference>
<dbReference type="GO" id="GO:0005829">
    <property type="term" value="C:cytosol"/>
    <property type="evidence" value="ECO:0007669"/>
    <property type="project" value="TreeGrafter"/>
</dbReference>
<dbReference type="GO" id="GO:0004342">
    <property type="term" value="F:glucosamine-6-phosphate deaminase activity"/>
    <property type="evidence" value="ECO:0007669"/>
    <property type="project" value="UniProtKB-UniRule"/>
</dbReference>
<dbReference type="GO" id="GO:0042802">
    <property type="term" value="F:identical protein binding"/>
    <property type="evidence" value="ECO:0007669"/>
    <property type="project" value="TreeGrafter"/>
</dbReference>
<dbReference type="GO" id="GO:0005975">
    <property type="term" value="P:carbohydrate metabolic process"/>
    <property type="evidence" value="ECO:0007669"/>
    <property type="project" value="InterPro"/>
</dbReference>
<dbReference type="GO" id="GO:0006043">
    <property type="term" value="P:glucosamine catabolic process"/>
    <property type="evidence" value="ECO:0007669"/>
    <property type="project" value="TreeGrafter"/>
</dbReference>
<dbReference type="GO" id="GO:0006046">
    <property type="term" value="P:N-acetylglucosamine catabolic process"/>
    <property type="evidence" value="ECO:0007669"/>
    <property type="project" value="TreeGrafter"/>
</dbReference>
<dbReference type="GO" id="GO:0019262">
    <property type="term" value="P:N-acetylneuraminate catabolic process"/>
    <property type="evidence" value="ECO:0007669"/>
    <property type="project" value="UniProtKB-UniRule"/>
</dbReference>
<dbReference type="CDD" id="cd01399">
    <property type="entry name" value="GlcN6P_deaminase"/>
    <property type="match status" value="1"/>
</dbReference>
<dbReference type="FunFam" id="3.40.50.1360:FF:000002">
    <property type="entry name" value="Glucosamine-6-phosphate deaminase"/>
    <property type="match status" value="1"/>
</dbReference>
<dbReference type="Gene3D" id="3.40.50.1360">
    <property type="match status" value="1"/>
</dbReference>
<dbReference type="HAMAP" id="MF_01241">
    <property type="entry name" value="GlcN6P_deamin"/>
    <property type="match status" value="1"/>
</dbReference>
<dbReference type="InterPro" id="IPR006148">
    <property type="entry name" value="Glc/Gal-6P_isomerase"/>
</dbReference>
<dbReference type="InterPro" id="IPR004547">
    <property type="entry name" value="Glucosamine6P_isomerase"/>
</dbReference>
<dbReference type="InterPro" id="IPR018321">
    <property type="entry name" value="Glucosamine6P_isomerase_CS"/>
</dbReference>
<dbReference type="InterPro" id="IPR037171">
    <property type="entry name" value="NagB/RpiA_transferase-like"/>
</dbReference>
<dbReference type="NCBIfam" id="TIGR00502">
    <property type="entry name" value="nagB"/>
    <property type="match status" value="1"/>
</dbReference>
<dbReference type="NCBIfam" id="NF001685">
    <property type="entry name" value="PRK00443.1-5"/>
    <property type="match status" value="1"/>
</dbReference>
<dbReference type="PANTHER" id="PTHR11280">
    <property type="entry name" value="GLUCOSAMINE-6-PHOSPHATE ISOMERASE"/>
    <property type="match status" value="1"/>
</dbReference>
<dbReference type="PANTHER" id="PTHR11280:SF5">
    <property type="entry name" value="GLUCOSAMINE-6-PHOSPHATE ISOMERASE"/>
    <property type="match status" value="1"/>
</dbReference>
<dbReference type="Pfam" id="PF01182">
    <property type="entry name" value="Glucosamine_iso"/>
    <property type="match status" value="1"/>
</dbReference>
<dbReference type="SUPFAM" id="SSF100950">
    <property type="entry name" value="NagB/RpiA/CoA transferase-like"/>
    <property type="match status" value="1"/>
</dbReference>
<dbReference type="PROSITE" id="PS01161">
    <property type="entry name" value="GLC_GALNAC_ISOMERASE"/>
    <property type="match status" value="1"/>
</dbReference>
<comment type="function">
    <text evidence="1">Catalyzes the reversible isomerization-deamination of glucosamine 6-phosphate (GlcN6P) to form fructose 6-phosphate (Fru6P) and ammonium ion.</text>
</comment>
<comment type="catalytic activity">
    <reaction evidence="1">
        <text>alpha-D-glucosamine 6-phosphate + H2O = beta-D-fructose 6-phosphate + NH4(+)</text>
        <dbReference type="Rhea" id="RHEA:12172"/>
        <dbReference type="ChEBI" id="CHEBI:15377"/>
        <dbReference type="ChEBI" id="CHEBI:28938"/>
        <dbReference type="ChEBI" id="CHEBI:57634"/>
        <dbReference type="ChEBI" id="CHEBI:75989"/>
        <dbReference type="EC" id="3.5.99.6"/>
    </reaction>
</comment>
<comment type="activity regulation">
    <text evidence="1">Allosterically activated by N-acetylglucosamine 6-phosphate (GlcNAc6P).</text>
</comment>
<comment type="pathway">
    <text evidence="1">Amino-sugar metabolism; N-acetylneuraminate degradation; D-fructose 6-phosphate from N-acetylneuraminate: step 5/5.</text>
</comment>
<comment type="subunit">
    <text evidence="1">Homohexamer; trimer of disulfide-linked dimers.</text>
</comment>
<comment type="similarity">
    <text evidence="1">Belongs to the glucosamine/galactosamine-6-phosphate isomerase family. NagB subfamily.</text>
</comment>
<sequence length="266" mass="29774">MRLIPLTTAEQVGKWAARHIVNRINAFKPTADRPFVLGLPTGGTPMTTYKALVEMHKAGQVSFKHVVTFNMDEYVGLPKEHPESYYSFMHRNFFDHVDIPAENINLLNGNAPDIDAECRQYEEKIRSYGKIHLFMGGVGNDGHIAFNEPASSLASRTRIKTLTHDTRVANSRFFDNDVNQVPKYALTVGVGTLLDAEEVMILVLGSQKALALQAAVEGCVNHMWTISCLQLHPKAIMVCDEPSTMELKVKTLRYFNELEAENIKGL</sequence>
<gene>
    <name evidence="1" type="primary">nagB</name>
    <name type="ordered locus">ECH74115_0769</name>
</gene>
<name>NAGB_ECO5E</name>